<name>RS8_XYLFA</name>
<feature type="chain" id="PRO_0000126529" description="Small ribosomal subunit protein uS8">
    <location>
        <begin position="1"/>
        <end position="132"/>
    </location>
</feature>
<keyword id="KW-0687">Ribonucleoprotein</keyword>
<keyword id="KW-0689">Ribosomal protein</keyword>
<keyword id="KW-0694">RNA-binding</keyword>
<keyword id="KW-0699">rRNA-binding</keyword>
<dbReference type="EMBL" id="AE003849">
    <property type="protein sequence ID" value="AAF83976.1"/>
    <property type="molecule type" value="Genomic_DNA"/>
</dbReference>
<dbReference type="PIR" id="G82713">
    <property type="entry name" value="G82713"/>
</dbReference>
<dbReference type="RefSeq" id="WP_010893680.1">
    <property type="nucleotide sequence ID" value="NC_002488.3"/>
</dbReference>
<dbReference type="SMR" id="Q9PE62"/>
<dbReference type="STRING" id="160492.XF_1166"/>
<dbReference type="KEGG" id="xfa:XF_1166"/>
<dbReference type="eggNOG" id="COG0096">
    <property type="taxonomic scope" value="Bacteria"/>
</dbReference>
<dbReference type="HOGENOM" id="CLU_098428_0_0_6"/>
<dbReference type="Proteomes" id="UP000000812">
    <property type="component" value="Chromosome"/>
</dbReference>
<dbReference type="GO" id="GO:1990904">
    <property type="term" value="C:ribonucleoprotein complex"/>
    <property type="evidence" value="ECO:0007669"/>
    <property type="project" value="UniProtKB-KW"/>
</dbReference>
<dbReference type="GO" id="GO:0005840">
    <property type="term" value="C:ribosome"/>
    <property type="evidence" value="ECO:0007669"/>
    <property type="project" value="UniProtKB-KW"/>
</dbReference>
<dbReference type="GO" id="GO:0019843">
    <property type="term" value="F:rRNA binding"/>
    <property type="evidence" value="ECO:0007669"/>
    <property type="project" value="UniProtKB-UniRule"/>
</dbReference>
<dbReference type="GO" id="GO:0003735">
    <property type="term" value="F:structural constituent of ribosome"/>
    <property type="evidence" value="ECO:0007669"/>
    <property type="project" value="InterPro"/>
</dbReference>
<dbReference type="GO" id="GO:0006412">
    <property type="term" value="P:translation"/>
    <property type="evidence" value="ECO:0007669"/>
    <property type="project" value="UniProtKB-UniRule"/>
</dbReference>
<dbReference type="FunFam" id="3.30.1490.10:FF:000001">
    <property type="entry name" value="30S ribosomal protein S8"/>
    <property type="match status" value="1"/>
</dbReference>
<dbReference type="Gene3D" id="3.30.1370.30">
    <property type="match status" value="1"/>
</dbReference>
<dbReference type="Gene3D" id="3.30.1490.10">
    <property type="match status" value="1"/>
</dbReference>
<dbReference type="HAMAP" id="MF_01302_B">
    <property type="entry name" value="Ribosomal_uS8_B"/>
    <property type="match status" value="1"/>
</dbReference>
<dbReference type="InterPro" id="IPR000630">
    <property type="entry name" value="Ribosomal_uS8"/>
</dbReference>
<dbReference type="InterPro" id="IPR047863">
    <property type="entry name" value="Ribosomal_uS8_CS"/>
</dbReference>
<dbReference type="InterPro" id="IPR035987">
    <property type="entry name" value="Ribosomal_uS8_sf"/>
</dbReference>
<dbReference type="NCBIfam" id="NF001109">
    <property type="entry name" value="PRK00136.1"/>
    <property type="match status" value="1"/>
</dbReference>
<dbReference type="PANTHER" id="PTHR11758">
    <property type="entry name" value="40S RIBOSOMAL PROTEIN S15A"/>
    <property type="match status" value="1"/>
</dbReference>
<dbReference type="Pfam" id="PF00410">
    <property type="entry name" value="Ribosomal_S8"/>
    <property type="match status" value="1"/>
</dbReference>
<dbReference type="SUPFAM" id="SSF56047">
    <property type="entry name" value="Ribosomal protein S8"/>
    <property type="match status" value="1"/>
</dbReference>
<dbReference type="PROSITE" id="PS00053">
    <property type="entry name" value="RIBOSOMAL_S8"/>
    <property type="match status" value="1"/>
</dbReference>
<organism>
    <name type="scientific">Xylella fastidiosa (strain 9a5c)</name>
    <dbReference type="NCBI Taxonomy" id="160492"/>
    <lineage>
        <taxon>Bacteria</taxon>
        <taxon>Pseudomonadati</taxon>
        <taxon>Pseudomonadota</taxon>
        <taxon>Gammaproteobacteria</taxon>
        <taxon>Lysobacterales</taxon>
        <taxon>Lysobacteraceae</taxon>
        <taxon>Xylella</taxon>
    </lineage>
</organism>
<proteinExistence type="inferred from homology"/>
<comment type="function">
    <text evidence="1">One of the primary rRNA binding proteins, it binds directly to 16S rRNA central domain where it helps coordinate assembly of the platform of the 30S subunit.</text>
</comment>
<comment type="subunit">
    <text evidence="1">Part of the 30S ribosomal subunit. Contacts proteins S5 and S12.</text>
</comment>
<comment type="similarity">
    <text evidence="1">Belongs to the universal ribosomal protein uS8 family.</text>
</comment>
<evidence type="ECO:0000255" key="1">
    <source>
        <dbReference type="HAMAP-Rule" id="MF_01302"/>
    </source>
</evidence>
<evidence type="ECO:0000305" key="2"/>
<sequence>MSMTDPIADMLVRINNAASVGKPNVRFPFSRVKLAIALVLKHEGYIFDAKVIQGDNSKSDIEIVLKYFEGRPVIRILKRVSRSGLRKYCGKAELPKVLGGLGISIISTSKGIMIDSKARESGVGGEVLCFVA</sequence>
<gene>
    <name evidence="1" type="primary">rpsH</name>
    <name type="ordered locus">XF_1166</name>
</gene>
<reference key="1">
    <citation type="journal article" date="2000" name="Nature">
        <title>The genome sequence of the plant pathogen Xylella fastidiosa.</title>
        <authorList>
            <person name="Simpson A.J.G."/>
            <person name="Reinach F.C."/>
            <person name="Arruda P."/>
            <person name="Abreu F.A."/>
            <person name="Acencio M."/>
            <person name="Alvarenga R."/>
            <person name="Alves L.M.C."/>
            <person name="Araya J.E."/>
            <person name="Baia G.S."/>
            <person name="Baptista C.S."/>
            <person name="Barros M.H."/>
            <person name="Bonaccorsi E.D."/>
            <person name="Bordin S."/>
            <person name="Bove J.M."/>
            <person name="Briones M.R.S."/>
            <person name="Bueno M.R.P."/>
            <person name="Camargo A.A."/>
            <person name="Camargo L.E.A."/>
            <person name="Carraro D.M."/>
            <person name="Carrer H."/>
            <person name="Colauto N.B."/>
            <person name="Colombo C."/>
            <person name="Costa F.F."/>
            <person name="Costa M.C.R."/>
            <person name="Costa-Neto C.M."/>
            <person name="Coutinho L.L."/>
            <person name="Cristofani M."/>
            <person name="Dias-Neto E."/>
            <person name="Docena C."/>
            <person name="El-Dorry H."/>
            <person name="Facincani A.P."/>
            <person name="Ferreira A.J.S."/>
            <person name="Ferreira V.C.A."/>
            <person name="Ferro J.A."/>
            <person name="Fraga J.S."/>
            <person name="Franca S.C."/>
            <person name="Franco M.C."/>
            <person name="Frohme M."/>
            <person name="Furlan L.R."/>
            <person name="Garnier M."/>
            <person name="Goldman G.H."/>
            <person name="Goldman M.H.S."/>
            <person name="Gomes S.L."/>
            <person name="Gruber A."/>
            <person name="Ho P.L."/>
            <person name="Hoheisel J.D."/>
            <person name="Junqueira M.L."/>
            <person name="Kemper E.L."/>
            <person name="Kitajima J.P."/>
            <person name="Krieger J.E."/>
            <person name="Kuramae E.E."/>
            <person name="Laigret F."/>
            <person name="Lambais M.R."/>
            <person name="Leite L.C.C."/>
            <person name="Lemos E.G.M."/>
            <person name="Lemos M.V.F."/>
            <person name="Lopes S.A."/>
            <person name="Lopes C.R."/>
            <person name="Machado J.A."/>
            <person name="Machado M.A."/>
            <person name="Madeira A.M.B.N."/>
            <person name="Madeira H.M.F."/>
            <person name="Marino C.L."/>
            <person name="Marques M.V."/>
            <person name="Martins E.A.L."/>
            <person name="Martins E.M.F."/>
            <person name="Matsukuma A.Y."/>
            <person name="Menck C.F.M."/>
            <person name="Miracca E.C."/>
            <person name="Miyaki C.Y."/>
            <person name="Monteiro-Vitorello C.B."/>
            <person name="Moon D.H."/>
            <person name="Nagai M.A."/>
            <person name="Nascimento A.L.T.O."/>
            <person name="Netto L.E.S."/>
            <person name="Nhani A. Jr."/>
            <person name="Nobrega F.G."/>
            <person name="Nunes L.R."/>
            <person name="Oliveira M.A."/>
            <person name="de Oliveira M.C."/>
            <person name="de Oliveira R.C."/>
            <person name="Palmieri D.A."/>
            <person name="Paris A."/>
            <person name="Peixoto B.R."/>
            <person name="Pereira G.A.G."/>
            <person name="Pereira H.A. Jr."/>
            <person name="Pesquero J.B."/>
            <person name="Quaggio R.B."/>
            <person name="Roberto P.G."/>
            <person name="Rodrigues V."/>
            <person name="de Rosa A.J.M."/>
            <person name="de Rosa V.E. Jr."/>
            <person name="de Sa R.G."/>
            <person name="Santelli R.V."/>
            <person name="Sawasaki H.E."/>
            <person name="da Silva A.C.R."/>
            <person name="da Silva A.M."/>
            <person name="da Silva F.R."/>
            <person name="Silva W.A. Jr."/>
            <person name="da Silveira J.F."/>
            <person name="Silvestri M.L.Z."/>
            <person name="Siqueira W.J."/>
            <person name="de Souza A.A."/>
            <person name="de Souza A.P."/>
            <person name="Terenzi M.F."/>
            <person name="Truffi D."/>
            <person name="Tsai S.M."/>
            <person name="Tsuhako M.H."/>
            <person name="Vallada H."/>
            <person name="Van Sluys M.A."/>
            <person name="Verjovski-Almeida S."/>
            <person name="Vettore A.L."/>
            <person name="Zago M.A."/>
            <person name="Zatz M."/>
            <person name="Meidanis J."/>
            <person name="Setubal J.C."/>
        </authorList>
    </citation>
    <scope>NUCLEOTIDE SEQUENCE [LARGE SCALE GENOMIC DNA]</scope>
    <source>
        <strain>9a5c</strain>
    </source>
</reference>
<protein>
    <recommendedName>
        <fullName evidence="1">Small ribosomal subunit protein uS8</fullName>
    </recommendedName>
    <alternativeName>
        <fullName evidence="2">30S ribosomal protein S8</fullName>
    </alternativeName>
</protein>
<accession>Q9PE62</accession>